<accession>P86879</accession>
<comment type="function">
    <text evidence="1 4">Involved in oxygen transport from gills to the various peripheral tissues.</text>
</comment>
<comment type="subunit">
    <text evidence="5">Heterotetramer of two alpha chains and two beta chains.</text>
</comment>
<comment type="tissue specificity">
    <text evidence="6">Red blood cells.</text>
</comment>
<comment type="mass spectrometry" mass="16121.5" error="0.3" method="MALDI" evidence="4"/>
<comment type="miscellaneous">
    <text evidence="4">This fish has just a single hemoglobin. It displays a weak Bohr effect that is not effector-enhanced and shows a propensity to form disulfide-linked polymers in vitro.</text>
</comment>
<comment type="similarity">
    <text evidence="3">Belongs to the globin family.</text>
</comment>
<evidence type="ECO:0000250" key="1">
    <source>
        <dbReference type="UniProtKB" id="P02070"/>
    </source>
</evidence>
<evidence type="ECO:0000250" key="2">
    <source>
        <dbReference type="UniProtKB" id="P83272"/>
    </source>
</evidence>
<evidence type="ECO:0000255" key="3">
    <source>
        <dbReference type="PROSITE-ProRule" id="PRU00238"/>
    </source>
</evidence>
<evidence type="ECO:0000269" key="4">
    <source>
    </source>
</evidence>
<evidence type="ECO:0000303" key="5">
    <source>
    </source>
</evidence>
<evidence type="ECO:0000305" key="6"/>
<protein>
    <recommendedName>
        <fullName evidence="5">Hemoglobin subunit beta-1</fullName>
    </recommendedName>
    <alternativeName>
        <fullName evidence="2">Beta-1-globin</fullName>
    </alternativeName>
    <alternativeName>
        <fullName evidence="2">Hemoglobin beta-1 chain</fullName>
    </alternativeName>
</protein>
<gene>
    <name evidence="2" type="primary">hbb1</name>
</gene>
<feature type="chain" id="PRO_0000419013" description="Hemoglobin subunit beta-1">
    <location>
        <begin position="1"/>
        <end position="146"/>
    </location>
</feature>
<feature type="domain" description="Globin" evidence="3">
    <location>
        <begin position="2"/>
        <end position="146"/>
    </location>
</feature>
<feature type="binding site" description="distal binding residue" evidence="1 3">
    <location>
        <position position="63"/>
    </location>
    <ligand>
        <name>heme b</name>
        <dbReference type="ChEBI" id="CHEBI:60344"/>
    </ligand>
    <ligandPart>
        <name>Fe</name>
        <dbReference type="ChEBI" id="CHEBI:18248"/>
    </ligandPart>
</feature>
<feature type="binding site" description="proximal binding residue" evidence="1 3">
    <location>
        <position position="92"/>
    </location>
    <ligand>
        <name>heme b</name>
        <dbReference type="ChEBI" id="CHEBI:60344"/>
    </ligand>
    <ligandPart>
        <name>Fe</name>
        <dbReference type="ChEBI" id="CHEBI:18248"/>
    </ligandPart>
</feature>
<dbReference type="SMR" id="P86879"/>
<dbReference type="GO" id="GO:0072562">
    <property type="term" value="C:blood microparticle"/>
    <property type="evidence" value="ECO:0007669"/>
    <property type="project" value="TreeGrafter"/>
</dbReference>
<dbReference type="GO" id="GO:0031838">
    <property type="term" value="C:haptoglobin-hemoglobin complex"/>
    <property type="evidence" value="ECO:0007669"/>
    <property type="project" value="TreeGrafter"/>
</dbReference>
<dbReference type="GO" id="GO:0005833">
    <property type="term" value="C:hemoglobin complex"/>
    <property type="evidence" value="ECO:0000250"/>
    <property type="project" value="UniProtKB"/>
</dbReference>
<dbReference type="GO" id="GO:0031720">
    <property type="term" value="F:haptoglobin binding"/>
    <property type="evidence" value="ECO:0007669"/>
    <property type="project" value="TreeGrafter"/>
</dbReference>
<dbReference type="GO" id="GO:0020037">
    <property type="term" value="F:heme binding"/>
    <property type="evidence" value="ECO:0007669"/>
    <property type="project" value="InterPro"/>
</dbReference>
<dbReference type="GO" id="GO:0046872">
    <property type="term" value="F:metal ion binding"/>
    <property type="evidence" value="ECO:0007669"/>
    <property type="project" value="UniProtKB-KW"/>
</dbReference>
<dbReference type="GO" id="GO:0043177">
    <property type="term" value="F:organic acid binding"/>
    <property type="evidence" value="ECO:0007669"/>
    <property type="project" value="TreeGrafter"/>
</dbReference>
<dbReference type="GO" id="GO:0019825">
    <property type="term" value="F:oxygen binding"/>
    <property type="evidence" value="ECO:0007669"/>
    <property type="project" value="InterPro"/>
</dbReference>
<dbReference type="GO" id="GO:0005344">
    <property type="term" value="F:oxygen carrier activity"/>
    <property type="evidence" value="ECO:0000250"/>
    <property type="project" value="UniProtKB"/>
</dbReference>
<dbReference type="GO" id="GO:0004601">
    <property type="term" value="F:peroxidase activity"/>
    <property type="evidence" value="ECO:0007669"/>
    <property type="project" value="TreeGrafter"/>
</dbReference>
<dbReference type="GO" id="GO:0042744">
    <property type="term" value="P:hydrogen peroxide catabolic process"/>
    <property type="evidence" value="ECO:0007669"/>
    <property type="project" value="TreeGrafter"/>
</dbReference>
<dbReference type="GO" id="GO:0015671">
    <property type="term" value="P:oxygen transport"/>
    <property type="evidence" value="ECO:0000250"/>
    <property type="project" value="UniProtKB"/>
</dbReference>
<dbReference type="CDD" id="cd08925">
    <property type="entry name" value="Hb-beta-like"/>
    <property type="match status" value="1"/>
</dbReference>
<dbReference type="FunFam" id="1.10.490.10:FF:000001">
    <property type="entry name" value="Hemoglobin subunit beta"/>
    <property type="match status" value="1"/>
</dbReference>
<dbReference type="Gene3D" id="1.10.490.10">
    <property type="entry name" value="Globins"/>
    <property type="match status" value="1"/>
</dbReference>
<dbReference type="InterPro" id="IPR000971">
    <property type="entry name" value="Globin"/>
</dbReference>
<dbReference type="InterPro" id="IPR009050">
    <property type="entry name" value="Globin-like_sf"/>
</dbReference>
<dbReference type="InterPro" id="IPR012292">
    <property type="entry name" value="Globin/Proto"/>
</dbReference>
<dbReference type="InterPro" id="IPR002337">
    <property type="entry name" value="Hemoglobin_b"/>
</dbReference>
<dbReference type="InterPro" id="IPR050056">
    <property type="entry name" value="Hemoglobin_oxygen_transport"/>
</dbReference>
<dbReference type="PANTHER" id="PTHR11442">
    <property type="entry name" value="HEMOGLOBIN FAMILY MEMBER"/>
    <property type="match status" value="1"/>
</dbReference>
<dbReference type="PANTHER" id="PTHR11442:SF7">
    <property type="entry name" value="HEMOGLOBIN SUBUNIT EPSILON"/>
    <property type="match status" value="1"/>
</dbReference>
<dbReference type="Pfam" id="PF00042">
    <property type="entry name" value="Globin"/>
    <property type="match status" value="1"/>
</dbReference>
<dbReference type="PRINTS" id="PR00814">
    <property type="entry name" value="BETAHAEM"/>
</dbReference>
<dbReference type="SUPFAM" id="SSF46458">
    <property type="entry name" value="Globin-like"/>
    <property type="match status" value="1"/>
</dbReference>
<dbReference type="PROSITE" id="PS01033">
    <property type="entry name" value="GLOBIN"/>
    <property type="match status" value="1"/>
</dbReference>
<keyword id="KW-0903">Direct protein sequencing</keyword>
<keyword id="KW-0349">Heme</keyword>
<keyword id="KW-0408">Iron</keyword>
<keyword id="KW-0479">Metal-binding</keyword>
<keyword id="KW-0561">Oxygen transport</keyword>
<keyword id="KW-0813">Transport</keyword>
<sequence length="146" mass="16121">VKWTDKERAVILGIFSGLDYEDIGPKALVRCLIVYPWTQRYFGTFGNLSTPAAISGNPKIAAHGVKVLHGLDMALQHMDNIMETYADLSILHSETLHVDPDNFKLLADCLTITIAAKMGHCFTPDTQIAFHKFLAVVVSALGKQYC</sequence>
<reference evidence="6" key="1">
    <citation type="journal article" date="2011" name="IUBMB Life">
        <title>Polymerization of hemoglobins in Arctic fish: Lycodes reticulatus and Gadus morhua.</title>
        <authorList>
            <person name="Riccio A."/>
            <person name="Mangiapia G."/>
            <person name="Giordano D."/>
            <person name="Flagiello A."/>
            <person name="Tedesco R."/>
            <person name="Bruno S."/>
            <person name="Vergara A."/>
            <person name="Mazzarella L."/>
            <person name="di Prisco G."/>
            <person name="Pucci P."/>
            <person name="Paduano L."/>
            <person name="Verde C."/>
        </authorList>
    </citation>
    <scope>PROTEIN SEQUENCE</scope>
    <scope>FUNCTION</scope>
    <scope>SUBUNIT</scope>
    <scope>MASS SPECTROMETRY</scope>
    <source>
        <tissue evidence="4">Blood</tissue>
    </source>
</reference>
<organism>
    <name type="scientific">Lycodes reticulatus</name>
    <name type="common">Arctic eelpout</name>
    <dbReference type="NCBI Taxonomy" id="215418"/>
    <lineage>
        <taxon>Eukaryota</taxon>
        <taxon>Metazoa</taxon>
        <taxon>Chordata</taxon>
        <taxon>Craniata</taxon>
        <taxon>Vertebrata</taxon>
        <taxon>Euteleostomi</taxon>
        <taxon>Actinopterygii</taxon>
        <taxon>Neopterygii</taxon>
        <taxon>Teleostei</taxon>
        <taxon>Neoteleostei</taxon>
        <taxon>Acanthomorphata</taxon>
        <taxon>Eupercaria</taxon>
        <taxon>Perciformes</taxon>
        <taxon>Cottioidei</taxon>
        <taxon>Zoarcales</taxon>
        <taxon>Zoarcidae</taxon>
        <taxon>Lycodinae</taxon>
        <taxon>Lycodes</taxon>
    </lineage>
</organism>
<name>HBB1_LYCRE</name>
<proteinExistence type="evidence at protein level"/>